<sequence>MIEIGKTIIKFPPLIEGILIKRYKRFLADIELDDGEVVTAHCANTGPMKGVLWPGGRVRLKYSPSPKRKLDWSWEQAEVPSHNEKKKCWVGINTSLPNKLIKHLIEANCLERQFGQISSIKPEVVYGLERKSRIDLLLYPSIQNEDSRKIFVEVKNTTWCDDSLALFPDTVTTRGQKHLKELMSVYPDSRAVLIPCISRSDMELFSPGEIADPEYGRLFREALTKGVEVIPCAFGFFIDHITWEGTRPLKSSR</sequence>
<dbReference type="EMBL" id="CP000553">
    <property type="protein sequence ID" value="ABM74904.1"/>
    <property type="molecule type" value="Genomic_DNA"/>
</dbReference>
<dbReference type="RefSeq" id="WP_011823110.1">
    <property type="nucleotide sequence ID" value="NC_008819.1"/>
</dbReference>
<dbReference type="SMR" id="A2C094"/>
<dbReference type="KEGG" id="pme:NATL1_03401"/>
<dbReference type="eggNOG" id="COG1489">
    <property type="taxonomic scope" value="Bacteria"/>
</dbReference>
<dbReference type="HOGENOM" id="CLU_052299_2_0_3"/>
<dbReference type="Proteomes" id="UP000002592">
    <property type="component" value="Chromosome"/>
</dbReference>
<dbReference type="GO" id="GO:0003677">
    <property type="term" value="F:DNA binding"/>
    <property type="evidence" value="ECO:0007669"/>
    <property type="project" value="InterPro"/>
</dbReference>
<dbReference type="CDD" id="cd22359">
    <property type="entry name" value="SfsA-like_bacterial"/>
    <property type="match status" value="1"/>
</dbReference>
<dbReference type="Gene3D" id="2.40.50.580">
    <property type="match status" value="1"/>
</dbReference>
<dbReference type="Gene3D" id="3.40.1350.60">
    <property type="match status" value="1"/>
</dbReference>
<dbReference type="HAMAP" id="MF_00095">
    <property type="entry name" value="SfsA"/>
    <property type="match status" value="1"/>
</dbReference>
<dbReference type="InterPro" id="IPR005224">
    <property type="entry name" value="SfsA"/>
</dbReference>
<dbReference type="InterPro" id="IPR040452">
    <property type="entry name" value="SfsA_C"/>
</dbReference>
<dbReference type="InterPro" id="IPR041465">
    <property type="entry name" value="SfsA_N"/>
</dbReference>
<dbReference type="NCBIfam" id="TIGR00230">
    <property type="entry name" value="sfsA"/>
    <property type="match status" value="1"/>
</dbReference>
<dbReference type="PANTHER" id="PTHR30545">
    <property type="entry name" value="SUGAR FERMENTATION STIMULATION PROTEIN A"/>
    <property type="match status" value="1"/>
</dbReference>
<dbReference type="PANTHER" id="PTHR30545:SF2">
    <property type="entry name" value="SUGAR FERMENTATION STIMULATION PROTEIN A"/>
    <property type="match status" value="1"/>
</dbReference>
<dbReference type="Pfam" id="PF03749">
    <property type="entry name" value="SfsA"/>
    <property type="match status" value="1"/>
</dbReference>
<dbReference type="Pfam" id="PF17746">
    <property type="entry name" value="SfsA_N"/>
    <property type="match status" value="1"/>
</dbReference>
<comment type="similarity">
    <text evidence="1">Belongs to the SfsA family.</text>
</comment>
<reference key="1">
    <citation type="journal article" date="2007" name="PLoS Genet.">
        <title>Patterns and implications of gene gain and loss in the evolution of Prochlorococcus.</title>
        <authorList>
            <person name="Kettler G.C."/>
            <person name="Martiny A.C."/>
            <person name="Huang K."/>
            <person name="Zucker J."/>
            <person name="Coleman M.L."/>
            <person name="Rodrigue S."/>
            <person name="Chen F."/>
            <person name="Lapidus A."/>
            <person name="Ferriera S."/>
            <person name="Johnson J."/>
            <person name="Steglich C."/>
            <person name="Church G.M."/>
            <person name="Richardson P."/>
            <person name="Chisholm S.W."/>
        </authorList>
    </citation>
    <scope>NUCLEOTIDE SEQUENCE [LARGE SCALE GENOMIC DNA]</scope>
    <source>
        <strain>NATL1A</strain>
    </source>
</reference>
<feature type="chain" id="PRO_0000340149" description="Sugar fermentation stimulation protein homolog">
    <location>
        <begin position="1"/>
        <end position="253"/>
    </location>
</feature>
<proteinExistence type="inferred from homology"/>
<evidence type="ECO:0000255" key="1">
    <source>
        <dbReference type="HAMAP-Rule" id="MF_00095"/>
    </source>
</evidence>
<gene>
    <name evidence="1" type="primary">sfsA</name>
    <name type="ordered locus">NATL1_03401</name>
</gene>
<protein>
    <recommendedName>
        <fullName evidence="1">Sugar fermentation stimulation protein homolog</fullName>
    </recommendedName>
</protein>
<organism>
    <name type="scientific">Prochlorococcus marinus (strain NATL1A)</name>
    <dbReference type="NCBI Taxonomy" id="167555"/>
    <lineage>
        <taxon>Bacteria</taxon>
        <taxon>Bacillati</taxon>
        <taxon>Cyanobacteriota</taxon>
        <taxon>Cyanophyceae</taxon>
        <taxon>Synechococcales</taxon>
        <taxon>Prochlorococcaceae</taxon>
        <taxon>Prochlorococcus</taxon>
    </lineage>
</organism>
<name>SFSA_PROM1</name>
<accession>A2C094</accession>